<sequence length="507" mass="54741">MAMAAAKGRVLPLLAVAAALAAALLYRAPFSKSLGGEGCSLLPHDHFWIASERVVTLGRVGPAAVEVKGGLINAIAVGDYRSFLLRRPVVDYGDAVIMPGLIDVHAHLDEPGRAEWEGFSTGTRAAAAGGITTLVDMPLNSYPSTVSEETLKLKLDAAKDKLHVDVGFWGGLVPENALNPSALESLLNAGVLGLKSFMCPSGINDFPMTNSTHIEEGLVTLAKYKRPLLIHAERIPDVQNEDGIDGELDPKAYTTYLKSRPPAWEEAAIKDLQRAMKDTEIGGRSEGAHIHIVHLSDAKTSLGLLKDAKQNGARVSVETCPHYLAFSAEEVPDGDTRFKCAPPIRDSTNRDNLWEALLDGHIDMLSSDHSPSAPDLKLMEEGNFLRAWGGISSLQFVLPVTWSHGKKYGISLNQLASWWSERPAMLAGLKKKGAVLPGYRADIVVWKPEAQFHLDDSHPVYHKHRNISAYLGKQLSGKILSTFVGGNLVFAEDKHAKAACGAPILAK</sequence>
<keyword id="KW-0378">Hydrolase</keyword>
<keyword id="KW-0479">Metal-binding</keyword>
<keyword id="KW-0659">Purine metabolism</keyword>
<keyword id="KW-1185">Reference proteome</keyword>
<keyword id="KW-0862">Zinc</keyword>
<reference key="1">
    <citation type="journal article" date="2002" name="Nature">
        <title>Sequence and analysis of rice chromosome 4.</title>
        <authorList>
            <person name="Feng Q."/>
            <person name="Zhang Y."/>
            <person name="Hao P."/>
            <person name="Wang S."/>
            <person name="Fu G."/>
            <person name="Huang Y."/>
            <person name="Li Y."/>
            <person name="Zhu J."/>
            <person name="Liu Y."/>
            <person name="Hu X."/>
            <person name="Jia P."/>
            <person name="Zhang Y."/>
            <person name="Zhao Q."/>
            <person name="Ying K."/>
            <person name="Yu S."/>
            <person name="Tang Y."/>
            <person name="Weng Q."/>
            <person name="Zhang L."/>
            <person name="Lu Y."/>
            <person name="Mu J."/>
            <person name="Lu Y."/>
            <person name="Zhang L.S."/>
            <person name="Yu Z."/>
            <person name="Fan D."/>
            <person name="Liu X."/>
            <person name="Lu T."/>
            <person name="Li C."/>
            <person name="Wu Y."/>
            <person name="Sun T."/>
            <person name="Lei H."/>
            <person name="Li T."/>
            <person name="Hu H."/>
            <person name="Guan J."/>
            <person name="Wu M."/>
            <person name="Zhang R."/>
            <person name="Zhou B."/>
            <person name="Chen Z."/>
            <person name="Chen L."/>
            <person name="Jin Z."/>
            <person name="Wang R."/>
            <person name="Yin H."/>
            <person name="Cai Z."/>
            <person name="Ren S."/>
            <person name="Lv G."/>
            <person name="Gu W."/>
            <person name="Zhu G."/>
            <person name="Tu Y."/>
            <person name="Jia J."/>
            <person name="Zhang Y."/>
            <person name="Chen J."/>
            <person name="Kang H."/>
            <person name="Chen X."/>
            <person name="Shao C."/>
            <person name="Sun Y."/>
            <person name="Hu Q."/>
            <person name="Zhang X."/>
            <person name="Zhang W."/>
            <person name="Wang L."/>
            <person name="Ding C."/>
            <person name="Sheng H."/>
            <person name="Gu J."/>
            <person name="Chen S."/>
            <person name="Ni L."/>
            <person name="Zhu F."/>
            <person name="Chen W."/>
            <person name="Lan L."/>
            <person name="Lai Y."/>
            <person name="Cheng Z."/>
            <person name="Gu M."/>
            <person name="Jiang J."/>
            <person name="Li J."/>
            <person name="Hong G."/>
            <person name="Xue Y."/>
            <person name="Han B."/>
        </authorList>
    </citation>
    <scope>NUCLEOTIDE SEQUENCE [LARGE SCALE GENOMIC DNA]</scope>
    <source>
        <strain>cv. Nipponbare</strain>
    </source>
</reference>
<reference key="2">
    <citation type="journal article" date="2005" name="Nature">
        <title>The map-based sequence of the rice genome.</title>
        <authorList>
            <consortium name="International rice genome sequencing project (IRGSP)"/>
        </authorList>
    </citation>
    <scope>NUCLEOTIDE SEQUENCE [LARGE SCALE GENOMIC DNA]</scope>
    <source>
        <strain>cv. Nipponbare</strain>
    </source>
</reference>
<reference key="3">
    <citation type="journal article" date="2008" name="Nucleic Acids Res.">
        <title>The rice annotation project database (RAP-DB): 2008 update.</title>
        <authorList>
            <consortium name="The rice annotation project (RAP)"/>
        </authorList>
    </citation>
    <scope>GENOME REANNOTATION</scope>
    <source>
        <strain>cv. Nipponbare</strain>
    </source>
</reference>
<reference key="4">
    <citation type="journal article" date="2013" name="Rice">
        <title>Improvement of the Oryza sativa Nipponbare reference genome using next generation sequence and optical map data.</title>
        <authorList>
            <person name="Kawahara Y."/>
            <person name="de la Bastide M."/>
            <person name="Hamilton J.P."/>
            <person name="Kanamori H."/>
            <person name="McCombie W.R."/>
            <person name="Ouyang S."/>
            <person name="Schwartz D.C."/>
            <person name="Tanaka T."/>
            <person name="Wu J."/>
            <person name="Zhou S."/>
            <person name="Childs K.L."/>
            <person name="Davidson R.M."/>
            <person name="Lin H."/>
            <person name="Quesada-Ocampo L."/>
            <person name="Vaillancourt B."/>
            <person name="Sakai H."/>
            <person name="Lee S.S."/>
            <person name="Kim J."/>
            <person name="Numa H."/>
            <person name="Itoh T."/>
            <person name="Buell C.R."/>
            <person name="Matsumoto T."/>
        </authorList>
    </citation>
    <scope>GENOME REANNOTATION</scope>
    <source>
        <strain>cv. Nipponbare</strain>
    </source>
</reference>
<reference key="5">
    <citation type="journal article" date="2005" name="PLoS Biol.">
        <title>The genomes of Oryza sativa: a history of duplications.</title>
        <authorList>
            <person name="Yu J."/>
            <person name="Wang J."/>
            <person name="Lin W."/>
            <person name="Li S."/>
            <person name="Li H."/>
            <person name="Zhou J."/>
            <person name="Ni P."/>
            <person name="Dong W."/>
            <person name="Hu S."/>
            <person name="Zeng C."/>
            <person name="Zhang J."/>
            <person name="Zhang Y."/>
            <person name="Li R."/>
            <person name="Xu Z."/>
            <person name="Li S."/>
            <person name="Li X."/>
            <person name="Zheng H."/>
            <person name="Cong L."/>
            <person name="Lin L."/>
            <person name="Yin J."/>
            <person name="Geng J."/>
            <person name="Li G."/>
            <person name="Shi J."/>
            <person name="Liu J."/>
            <person name="Lv H."/>
            <person name="Li J."/>
            <person name="Wang J."/>
            <person name="Deng Y."/>
            <person name="Ran L."/>
            <person name="Shi X."/>
            <person name="Wang X."/>
            <person name="Wu Q."/>
            <person name="Li C."/>
            <person name="Ren X."/>
            <person name="Wang J."/>
            <person name="Wang X."/>
            <person name="Li D."/>
            <person name="Liu D."/>
            <person name="Zhang X."/>
            <person name="Ji Z."/>
            <person name="Zhao W."/>
            <person name="Sun Y."/>
            <person name="Zhang Z."/>
            <person name="Bao J."/>
            <person name="Han Y."/>
            <person name="Dong L."/>
            <person name="Ji J."/>
            <person name="Chen P."/>
            <person name="Wu S."/>
            <person name="Liu J."/>
            <person name="Xiao Y."/>
            <person name="Bu D."/>
            <person name="Tan J."/>
            <person name="Yang L."/>
            <person name="Ye C."/>
            <person name="Zhang J."/>
            <person name="Xu J."/>
            <person name="Zhou Y."/>
            <person name="Yu Y."/>
            <person name="Zhang B."/>
            <person name="Zhuang S."/>
            <person name="Wei H."/>
            <person name="Liu B."/>
            <person name="Lei M."/>
            <person name="Yu H."/>
            <person name="Li Y."/>
            <person name="Xu H."/>
            <person name="Wei S."/>
            <person name="He X."/>
            <person name="Fang L."/>
            <person name="Zhang Z."/>
            <person name="Zhang Y."/>
            <person name="Huang X."/>
            <person name="Su Z."/>
            <person name="Tong W."/>
            <person name="Li J."/>
            <person name="Tong Z."/>
            <person name="Li S."/>
            <person name="Ye J."/>
            <person name="Wang L."/>
            <person name="Fang L."/>
            <person name="Lei T."/>
            <person name="Chen C.-S."/>
            <person name="Chen H.-C."/>
            <person name="Xu Z."/>
            <person name="Li H."/>
            <person name="Huang H."/>
            <person name="Zhang F."/>
            <person name="Xu H."/>
            <person name="Li N."/>
            <person name="Zhao C."/>
            <person name="Li S."/>
            <person name="Dong L."/>
            <person name="Huang Y."/>
            <person name="Li L."/>
            <person name="Xi Y."/>
            <person name="Qi Q."/>
            <person name="Li W."/>
            <person name="Zhang B."/>
            <person name="Hu W."/>
            <person name="Zhang Y."/>
            <person name="Tian X."/>
            <person name="Jiao Y."/>
            <person name="Liang X."/>
            <person name="Jin J."/>
            <person name="Gao L."/>
            <person name="Zheng W."/>
            <person name="Hao B."/>
            <person name="Liu S.-M."/>
            <person name="Wang W."/>
            <person name="Yuan L."/>
            <person name="Cao M."/>
            <person name="McDermott J."/>
            <person name="Samudrala R."/>
            <person name="Wang J."/>
            <person name="Wong G.K.-S."/>
            <person name="Yang H."/>
        </authorList>
    </citation>
    <scope>NUCLEOTIDE SEQUENCE [LARGE SCALE GENOMIC DNA]</scope>
    <source>
        <strain>cv. Nipponbare</strain>
    </source>
</reference>
<reference key="6">
    <citation type="journal article" date="2003" name="Science">
        <title>Collection, mapping, and annotation of over 28,000 cDNA clones from japonica rice.</title>
        <authorList>
            <consortium name="The rice full-length cDNA consortium"/>
        </authorList>
    </citation>
    <scope>NUCLEOTIDE SEQUENCE [LARGE SCALE MRNA]</scope>
    <source>
        <strain>cv. Nipponbare</strain>
    </source>
</reference>
<accession>B9FDB8</accession>
<accession>Q0J8Y7</accession>
<protein>
    <recommendedName>
        <fullName>Probable allantoinase</fullName>
        <shortName>OsALN</shortName>
        <ecNumber>3.5.2.5</ecNumber>
    </recommendedName>
</protein>
<gene>
    <name type="primary">ALN</name>
    <name type="ordered locus">Os04g0680400</name>
    <name type="ordered locus">LOC_Os04g58390</name>
    <name type="ORF">OsJ_16648</name>
</gene>
<feature type="chain" id="PRO_0000430042" description="Probable allantoinase">
    <location>
        <begin position="1"/>
        <end position="507"/>
    </location>
</feature>
<feature type="binding site" evidence="1">
    <location>
        <position position="105"/>
    </location>
    <ligand>
        <name>Zn(2+)</name>
        <dbReference type="ChEBI" id="CHEBI:29105"/>
        <label>1</label>
    </ligand>
</feature>
<feature type="binding site" evidence="1">
    <location>
        <position position="107"/>
    </location>
    <ligand>
        <name>Zn(2+)</name>
        <dbReference type="ChEBI" id="CHEBI:29105"/>
        <label>1</label>
    </ligand>
</feature>
<feature type="binding site" description="via carbamate group" evidence="1">
    <location>
        <position position="195"/>
    </location>
    <ligand>
        <name>Zn(2+)</name>
        <dbReference type="ChEBI" id="CHEBI:29105"/>
        <label>1</label>
    </ligand>
</feature>
<feature type="binding site" description="via carbamate group" evidence="1">
    <location>
        <position position="195"/>
    </location>
    <ligand>
        <name>Zn(2+)</name>
        <dbReference type="ChEBI" id="CHEBI:29105"/>
        <label>2</label>
    </ligand>
</feature>
<feature type="binding site" evidence="1">
    <location>
        <position position="231"/>
    </location>
    <ligand>
        <name>Zn(2+)</name>
        <dbReference type="ChEBI" id="CHEBI:29105"/>
        <label>2</label>
    </ligand>
</feature>
<feature type="binding site" evidence="1">
    <location>
        <position position="294"/>
    </location>
    <ligand>
        <name>Zn(2+)</name>
        <dbReference type="ChEBI" id="CHEBI:29105"/>
        <label>2</label>
    </ligand>
</feature>
<feature type="binding site" evidence="1">
    <location>
        <position position="368"/>
    </location>
    <ligand>
        <name>Zn(2+)</name>
        <dbReference type="ChEBI" id="CHEBI:29105"/>
        <label>1</label>
    </ligand>
</feature>
<feature type="modified residue" description="N6-carboxylysine" evidence="1">
    <location>
        <position position="195"/>
    </location>
</feature>
<feature type="sequence conflict" description="In Ref. 6; AK067234." evidence="2" ref="6">
    <original>P</original>
    <variation>L</variation>
    <location>
        <position position="143"/>
    </location>
</feature>
<feature type="sequence conflict" description="In Ref. 6; AK067234." evidence="2" ref="6">
    <original>A</original>
    <variation>E</variation>
    <location>
        <position position="275"/>
    </location>
</feature>
<feature type="sequence conflict" description="In Ref. 6; AK067234." evidence="2" ref="6">
    <original>I</original>
    <variation>S</variation>
    <location>
        <position position="290"/>
    </location>
</feature>
<comment type="function">
    <text evidence="1">Catalyzes the conversion of allantoin (5-ureidohydantoin) to allantoate by hydrolytic cleavage of the five-member hydantoin ring. Catalyzes the first step of the ureide allantoin degradation followed by the sequential activity of AAH, UGLYAH and UAH which allows a complete purine breakdown without the intermediate generation of urea (By similarity).</text>
</comment>
<comment type="catalytic activity">
    <reaction>
        <text>(S)-allantoin + H2O = allantoate + H(+)</text>
        <dbReference type="Rhea" id="RHEA:17029"/>
        <dbReference type="ChEBI" id="CHEBI:15377"/>
        <dbReference type="ChEBI" id="CHEBI:15378"/>
        <dbReference type="ChEBI" id="CHEBI:15678"/>
        <dbReference type="ChEBI" id="CHEBI:17536"/>
        <dbReference type="EC" id="3.5.2.5"/>
    </reaction>
</comment>
<comment type="cofactor">
    <cofactor evidence="1">
        <name>Zn(2+)</name>
        <dbReference type="ChEBI" id="CHEBI:29105"/>
    </cofactor>
    <text evidence="1">Binds 2 Zn(2+) ions per subunit.</text>
</comment>
<comment type="pathway">
    <text>Nitrogen metabolism; (S)-allantoin degradation; allantoate from (S)-allantoin: step 1/1.</text>
</comment>
<comment type="subunit">
    <text evidence="1">Homotetramer.</text>
</comment>
<comment type="PTM">
    <text evidence="1">Carboxylation allows a single lysine to coordinate two zinc ions.</text>
</comment>
<comment type="similarity">
    <text evidence="2">Belongs to the metallo-dependent hydrolases superfamily. Allantoinase family.</text>
</comment>
<comment type="sequence caution" evidence="2">
    <conflict type="erroneous gene model prediction">
        <sequence resource="EMBL-CDS" id="BAF16200"/>
    </conflict>
</comment>
<comment type="sequence caution" evidence="2">
    <conflict type="frameshift">
        <sequence resource="EMBL-CDS" id="BAF16200"/>
    </conflict>
</comment>
<organism>
    <name type="scientific">Oryza sativa subsp. japonica</name>
    <name type="common">Rice</name>
    <dbReference type="NCBI Taxonomy" id="39947"/>
    <lineage>
        <taxon>Eukaryota</taxon>
        <taxon>Viridiplantae</taxon>
        <taxon>Streptophyta</taxon>
        <taxon>Embryophyta</taxon>
        <taxon>Tracheophyta</taxon>
        <taxon>Spermatophyta</taxon>
        <taxon>Magnoliopsida</taxon>
        <taxon>Liliopsida</taxon>
        <taxon>Poales</taxon>
        <taxon>Poaceae</taxon>
        <taxon>BOP clade</taxon>
        <taxon>Oryzoideae</taxon>
        <taxon>Oryzeae</taxon>
        <taxon>Oryzinae</taxon>
        <taxon>Oryza</taxon>
        <taxon>Oryza sativa</taxon>
    </lineage>
</organism>
<name>ALN_ORYSJ</name>
<dbReference type="EC" id="3.5.2.5"/>
<dbReference type="EMBL" id="AL606456">
    <property type="status" value="NOT_ANNOTATED_CDS"/>
    <property type="molecule type" value="Genomic_DNA"/>
</dbReference>
<dbReference type="EMBL" id="AP008210">
    <property type="protein sequence ID" value="BAF16200.2"/>
    <property type="status" value="ALT_SEQ"/>
    <property type="molecule type" value="Genomic_DNA"/>
</dbReference>
<dbReference type="EMBL" id="AP014960">
    <property type="status" value="NOT_ANNOTATED_CDS"/>
    <property type="molecule type" value="Genomic_DNA"/>
</dbReference>
<dbReference type="EMBL" id="CM000141">
    <property type="protein sequence ID" value="EEE61915.1"/>
    <property type="molecule type" value="Genomic_DNA"/>
</dbReference>
<dbReference type="EMBL" id="AK067234">
    <property type="status" value="NOT_ANNOTATED_CDS"/>
    <property type="molecule type" value="mRNA"/>
</dbReference>
<dbReference type="SMR" id="B9FDB8"/>
<dbReference type="FunCoup" id="B9FDB8">
    <property type="interactions" value="15"/>
</dbReference>
<dbReference type="STRING" id="39947.B9FDB8"/>
<dbReference type="PaxDb" id="39947-B9FDB8"/>
<dbReference type="KEGG" id="dosa:Os04g0680400"/>
<dbReference type="eggNOG" id="KOG2584">
    <property type="taxonomic scope" value="Eukaryota"/>
</dbReference>
<dbReference type="HOGENOM" id="CLU_072441_0_0_1"/>
<dbReference type="InParanoid" id="B9FDB8"/>
<dbReference type="BRENDA" id="3.5.2.5">
    <property type="organism ID" value="8948"/>
</dbReference>
<dbReference type="PlantReactome" id="R-OSA-1119502">
    <property type="pathway name" value="Allantoin degradation"/>
</dbReference>
<dbReference type="UniPathway" id="UPA00395">
    <property type="reaction ID" value="UER00653"/>
</dbReference>
<dbReference type="Proteomes" id="UP000000763">
    <property type="component" value="Chromosome 4"/>
</dbReference>
<dbReference type="Proteomes" id="UP000007752">
    <property type="component" value="Chromosome 4"/>
</dbReference>
<dbReference type="Proteomes" id="UP000059680">
    <property type="component" value="Chromosome 4"/>
</dbReference>
<dbReference type="GO" id="GO:0005737">
    <property type="term" value="C:cytoplasm"/>
    <property type="evidence" value="ECO:0000318"/>
    <property type="project" value="GO_Central"/>
</dbReference>
<dbReference type="GO" id="GO:0004038">
    <property type="term" value="F:allantoinase activity"/>
    <property type="evidence" value="ECO:0000318"/>
    <property type="project" value="GO_Central"/>
</dbReference>
<dbReference type="GO" id="GO:0050897">
    <property type="term" value="F:cobalt ion binding"/>
    <property type="evidence" value="ECO:0007669"/>
    <property type="project" value="InterPro"/>
</dbReference>
<dbReference type="GO" id="GO:0008270">
    <property type="term" value="F:zinc ion binding"/>
    <property type="evidence" value="ECO:0007669"/>
    <property type="project" value="InterPro"/>
</dbReference>
<dbReference type="GO" id="GO:0000256">
    <property type="term" value="P:allantoin catabolic process"/>
    <property type="evidence" value="ECO:0007669"/>
    <property type="project" value="UniProtKB-UniPathway"/>
</dbReference>
<dbReference type="GO" id="GO:0006145">
    <property type="term" value="P:purine nucleobase catabolic process"/>
    <property type="evidence" value="ECO:0000318"/>
    <property type="project" value="GO_Central"/>
</dbReference>
<dbReference type="FunFam" id="3.20.20.140:FF:000032">
    <property type="entry name" value="Allantoinase Dal1"/>
    <property type="match status" value="1"/>
</dbReference>
<dbReference type="Gene3D" id="3.20.20.140">
    <property type="entry name" value="Metal-dependent hydrolases"/>
    <property type="match status" value="1"/>
</dbReference>
<dbReference type="InterPro" id="IPR017593">
    <property type="entry name" value="Allantoinase"/>
</dbReference>
<dbReference type="InterPro" id="IPR056854">
    <property type="entry name" value="ALN_composite"/>
</dbReference>
<dbReference type="InterPro" id="IPR006680">
    <property type="entry name" value="Amidohydro-rel"/>
</dbReference>
<dbReference type="InterPro" id="IPR050138">
    <property type="entry name" value="DHOase/Allantoinase_Hydrolase"/>
</dbReference>
<dbReference type="InterPro" id="IPR011059">
    <property type="entry name" value="Metal-dep_hydrolase_composite"/>
</dbReference>
<dbReference type="InterPro" id="IPR032466">
    <property type="entry name" value="Metal_Hydrolase"/>
</dbReference>
<dbReference type="NCBIfam" id="TIGR03178">
    <property type="entry name" value="allantoinase"/>
    <property type="match status" value="1"/>
</dbReference>
<dbReference type="PANTHER" id="PTHR43668">
    <property type="entry name" value="ALLANTOINASE"/>
    <property type="match status" value="1"/>
</dbReference>
<dbReference type="PANTHER" id="PTHR43668:SF2">
    <property type="entry name" value="ALLANTOINASE"/>
    <property type="match status" value="1"/>
</dbReference>
<dbReference type="Pfam" id="PF24890">
    <property type="entry name" value="ALN_composite"/>
    <property type="match status" value="1"/>
</dbReference>
<dbReference type="Pfam" id="PF01979">
    <property type="entry name" value="Amidohydro_1"/>
    <property type="match status" value="1"/>
</dbReference>
<dbReference type="SUPFAM" id="SSF51338">
    <property type="entry name" value="Composite domain of metallo-dependent hydrolases"/>
    <property type="match status" value="1"/>
</dbReference>
<dbReference type="SUPFAM" id="SSF51556">
    <property type="entry name" value="Metallo-dependent hydrolases"/>
    <property type="match status" value="1"/>
</dbReference>
<evidence type="ECO:0000250" key="1"/>
<evidence type="ECO:0000305" key="2"/>
<proteinExistence type="evidence at transcript level"/>